<dbReference type="EMBL" id="AE004439">
    <property type="protein sequence ID" value="AAK03382.1"/>
    <property type="molecule type" value="Genomic_DNA"/>
</dbReference>
<dbReference type="RefSeq" id="WP_005717782.1">
    <property type="nucleotide sequence ID" value="NC_002663.1"/>
</dbReference>
<dbReference type="SMR" id="Q9CLE0"/>
<dbReference type="STRING" id="272843.PM1298"/>
<dbReference type="EnsemblBacteria" id="AAK03382">
    <property type="protein sequence ID" value="AAK03382"/>
    <property type="gene ID" value="PM1298"/>
</dbReference>
<dbReference type="GeneID" id="77206748"/>
<dbReference type="KEGG" id="pmu:PM1298"/>
<dbReference type="HOGENOM" id="CLU_103507_2_2_6"/>
<dbReference type="OrthoDB" id="9803541at2"/>
<dbReference type="Proteomes" id="UP000000809">
    <property type="component" value="Chromosome"/>
</dbReference>
<dbReference type="GO" id="GO:0022625">
    <property type="term" value="C:cytosolic large ribosomal subunit"/>
    <property type="evidence" value="ECO:0007669"/>
    <property type="project" value="TreeGrafter"/>
</dbReference>
<dbReference type="GO" id="GO:0003735">
    <property type="term" value="F:structural constituent of ribosome"/>
    <property type="evidence" value="ECO:0007669"/>
    <property type="project" value="InterPro"/>
</dbReference>
<dbReference type="GO" id="GO:0006412">
    <property type="term" value="P:translation"/>
    <property type="evidence" value="ECO:0007669"/>
    <property type="project" value="UniProtKB-UniRule"/>
</dbReference>
<dbReference type="FunFam" id="2.30.30.790:FF:000001">
    <property type="entry name" value="50S ribosomal protein L19"/>
    <property type="match status" value="1"/>
</dbReference>
<dbReference type="Gene3D" id="2.30.30.790">
    <property type="match status" value="1"/>
</dbReference>
<dbReference type="HAMAP" id="MF_00402">
    <property type="entry name" value="Ribosomal_bL19"/>
    <property type="match status" value="1"/>
</dbReference>
<dbReference type="InterPro" id="IPR001857">
    <property type="entry name" value="Ribosomal_bL19"/>
</dbReference>
<dbReference type="InterPro" id="IPR018257">
    <property type="entry name" value="Ribosomal_bL19_CS"/>
</dbReference>
<dbReference type="InterPro" id="IPR038657">
    <property type="entry name" value="Ribosomal_bL19_sf"/>
</dbReference>
<dbReference type="InterPro" id="IPR008991">
    <property type="entry name" value="Translation_prot_SH3-like_sf"/>
</dbReference>
<dbReference type="NCBIfam" id="TIGR01024">
    <property type="entry name" value="rplS_bact"/>
    <property type="match status" value="1"/>
</dbReference>
<dbReference type="PANTHER" id="PTHR15680:SF9">
    <property type="entry name" value="LARGE RIBOSOMAL SUBUNIT PROTEIN BL19M"/>
    <property type="match status" value="1"/>
</dbReference>
<dbReference type="PANTHER" id="PTHR15680">
    <property type="entry name" value="RIBOSOMAL PROTEIN L19"/>
    <property type="match status" value="1"/>
</dbReference>
<dbReference type="Pfam" id="PF01245">
    <property type="entry name" value="Ribosomal_L19"/>
    <property type="match status" value="1"/>
</dbReference>
<dbReference type="PIRSF" id="PIRSF002191">
    <property type="entry name" value="Ribosomal_L19"/>
    <property type="match status" value="1"/>
</dbReference>
<dbReference type="PRINTS" id="PR00061">
    <property type="entry name" value="RIBOSOMALL19"/>
</dbReference>
<dbReference type="SUPFAM" id="SSF50104">
    <property type="entry name" value="Translation proteins SH3-like domain"/>
    <property type="match status" value="1"/>
</dbReference>
<dbReference type="PROSITE" id="PS01015">
    <property type="entry name" value="RIBOSOMAL_L19"/>
    <property type="match status" value="1"/>
</dbReference>
<reference key="1">
    <citation type="journal article" date="2001" name="Proc. Natl. Acad. Sci. U.S.A.">
        <title>Complete genomic sequence of Pasteurella multocida Pm70.</title>
        <authorList>
            <person name="May B.J."/>
            <person name="Zhang Q."/>
            <person name="Li L.L."/>
            <person name="Paustian M.L."/>
            <person name="Whittam T.S."/>
            <person name="Kapur V."/>
        </authorList>
    </citation>
    <scope>NUCLEOTIDE SEQUENCE [LARGE SCALE GENOMIC DNA]</scope>
    <source>
        <strain>Pm70</strain>
    </source>
</reference>
<proteinExistence type="inferred from homology"/>
<organism>
    <name type="scientific">Pasteurella multocida (strain Pm70)</name>
    <dbReference type="NCBI Taxonomy" id="272843"/>
    <lineage>
        <taxon>Bacteria</taxon>
        <taxon>Pseudomonadati</taxon>
        <taxon>Pseudomonadota</taxon>
        <taxon>Gammaproteobacteria</taxon>
        <taxon>Pasteurellales</taxon>
        <taxon>Pasteurellaceae</taxon>
        <taxon>Pasteurella</taxon>
    </lineage>
</organism>
<gene>
    <name evidence="1" type="primary">rplS</name>
    <name evidence="1" type="synonym">rpl19</name>
    <name type="ordered locus">PM1298</name>
</gene>
<evidence type="ECO:0000255" key="1">
    <source>
        <dbReference type="HAMAP-Rule" id="MF_00402"/>
    </source>
</evidence>
<evidence type="ECO:0000305" key="2"/>
<name>RL19_PASMU</name>
<sequence length="116" mass="13200">MSNIIKQLEQEQLKQNLPSFRPGDTLEVKVWVVEGSKRRLQAFEGVVIAIRNRGLHSAFTLRKVSNGVGVERVFQTHSPIVDSITVKRKGAVRQAKLYYLRERSGKSARIKERLGD</sequence>
<protein>
    <recommendedName>
        <fullName evidence="1">Large ribosomal subunit protein bL19</fullName>
    </recommendedName>
    <alternativeName>
        <fullName evidence="2">50S ribosomal protein L19</fullName>
    </alternativeName>
</protein>
<keyword id="KW-1185">Reference proteome</keyword>
<keyword id="KW-0687">Ribonucleoprotein</keyword>
<keyword id="KW-0689">Ribosomal protein</keyword>
<comment type="function">
    <text evidence="1">This protein is located at the 30S-50S ribosomal subunit interface and may play a role in the structure and function of the aminoacyl-tRNA binding site.</text>
</comment>
<comment type="similarity">
    <text evidence="1">Belongs to the bacterial ribosomal protein bL19 family.</text>
</comment>
<accession>Q9CLE0</accession>
<feature type="initiator methionine" description="Removed">
    <location>
        <position position="1"/>
    </location>
</feature>
<feature type="chain" id="PRO_0000163502" description="Large ribosomal subunit protein bL19">
    <location>
        <begin position="2"/>
        <end position="116"/>
    </location>
</feature>